<gene>
    <name evidence="1" type="primary">dxr</name>
    <name type="ordered locus">MUL_2085</name>
</gene>
<name>DXR_MYCUA</name>
<protein>
    <recommendedName>
        <fullName evidence="1">1-deoxy-D-xylulose 5-phosphate reductoisomerase</fullName>
        <shortName evidence="1">DXP reductoisomerase</shortName>
        <ecNumber evidence="1">1.1.1.267</ecNumber>
    </recommendedName>
    <alternativeName>
        <fullName evidence="1">1-deoxyxylulose-5-phosphate reductoisomerase</fullName>
    </alternativeName>
    <alternativeName>
        <fullName evidence="1">2-C-methyl-D-erythritol 4-phosphate synthase</fullName>
    </alternativeName>
</protein>
<reference key="1">
    <citation type="journal article" date="2007" name="Genome Res.">
        <title>Reductive evolution and niche adaptation inferred from the genome of Mycobacterium ulcerans, the causative agent of Buruli ulcer.</title>
        <authorList>
            <person name="Stinear T.P."/>
            <person name="Seemann T."/>
            <person name="Pidot S."/>
            <person name="Frigui W."/>
            <person name="Reysset G."/>
            <person name="Garnier T."/>
            <person name="Meurice G."/>
            <person name="Simon D."/>
            <person name="Bouchier C."/>
            <person name="Ma L."/>
            <person name="Tichit M."/>
            <person name="Porter J.L."/>
            <person name="Ryan J."/>
            <person name="Johnson P.D.R."/>
            <person name="Davies J.K."/>
            <person name="Jenkin G.A."/>
            <person name="Small P.L.C."/>
            <person name="Jones L.M."/>
            <person name="Tekaia F."/>
            <person name="Laval F."/>
            <person name="Daffe M."/>
            <person name="Parkhill J."/>
            <person name="Cole S.T."/>
        </authorList>
    </citation>
    <scope>NUCLEOTIDE SEQUENCE [LARGE SCALE GENOMIC DNA]</scope>
    <source>
        <strain>Agy99</strain>
    </source>
</reference>
<accession>A0PQ95</accession>
<organism>
    <name type="scientific">Mycobacterium ulcerans (strain Agy99)</name>
    <dbReference type="NCBI Taxonomy" id="362242"/>
    <lineage>
        <taxon>Bacteria</taxon>
        <taxon>Bacillati</taxon>
        <taxon>Actinomycetota</taxon>
        <taxon>Actinomycetes</taxon>
        <taxon>Mycobacteriales</taxon>
        <taxon>Mycobacteriaceae</taxon>
        <taxon>Mycobacterium</taxon>
        <taxon>Mycobacterium ulcerans group</taxon>
    </lineage>
</organism>
<evidence type="ECO:0000255" key="1">
    <source>
        <dbReference type="HAMAP-Rule" id="MF_00183"/>
    </source>
</evidence>
<proteinExistence type="inferred from homology"/>
<sequence length="402" mass="41961">MTTATDGFADGRLRVLVLGSTGSIGTQALEVIAANPDRFEVVGLAAGGSNLDTLRRQRAETGVTEIAIADERAAQLAGDIAYQEPDAVTRLVEETEADVVLNALVGALGLRPTLAALASGARLALANKESLVAGGPLVLQAAQPGQIVPVDSEHSALAQCLRAGTPDEVAKLVLTASGGPFRGWSAADLQEVTPEQAGAHPTWSMGPMNTLNSASLVNKGLELIETHLLFGISYERIEVVVHPQSIVHSMVTFVDGSTIAQASPPDMKLPISLALGWPRRVPGAARYCDFSQAQTWEFEPLDDEVFPAVELARHAGETGGCMTAVYNAANEEAAAAFLAGRISFPAIVGTIADVLHAADQWAVSPANVDDVLDAQRWARQRAQRAIAKASPAGACEKVSGLA</sequence>
<feature type="chain" id="PRO_1000118494" description="1-deoxy-D-xylulose 5-phosphate reductoisomerase">
    <location>
        <begin position="1"/>
        <end position="402"/>
    </location>
</feature>
<feature type="binding site" evidence="1">
    <location>
        <position position="21"/>
    </location>
    <ligand>
        <name>NADPH</name>
        <dbReference type="ChEBI" id="CHEBI:57783"/>
    </ligand>
</feature>
<feature type="binding site" evidence="1">
    <location>
        <position position="22"/>
    </location>
    <ligand>
        <name>NADPH</name>
        <dbReference type="ChEBI" id="CHEBI:57783"/>
    </ligand>
</feature>
<feature type="binding site" evidence="1">
    <location>
        <position position="23"/>
    </location>
    <ligand>
        <name>NADPH</name>
        <dbReference type="ChEBI" id="CHEBI:57783"/>
    </ligand>
</feature>
<feature type="binding site" evidence="1">
    <location>
        <position position="24"/>
    </location>
    <ligand>
        <name>NADPH</name>
        <dbReference type="ChEBI" id="CHEBI:57783"/>
    </ligand>
</feature>
<feature type="binding site" evidence="1">
    <location>
        <position position="47"/>
    </location>
    <ligand>
        <name>NADPH</name>
        <dbReference type="ChEBI" id="CHEBI:57783"/>
    </ligand>
</feature>
<feature type="binding site" evidence="1">
    <location>
        <position position="50"/>
    </location>
    <ligand>
        <name>NADPH</name>
        <dbReference type="ChEBI" id="CHEBI:57783"/>
    </ligand>
</feature>
<feature type="binding site" evidence="1">
    <location>
        <position position="127"/>
    </location>
    <ligand>
        <name>NADPH</name>
        <dbReference type="ChEBI" id="CHEBI:57783"/>
    </ligand>
</feature>
<feature type="binding site" evidence="1">
    <location>
        <position position="128"/>
    </location>
    <ligand>
        <name>1-deoxy-D-xylulose 5-phosphate</name>
        <dbReference type="ChEBI" id="CHEBI:57792"/>
    </ligand>
</feature>
<feature type="binding site" evidence="1">
    <location>
        <position position="129"/>
    </location>
    <ligand>
        <name>NADPH</name>
        <dbReference type="ChEBI" id="CHEBI:57783"/>
    </ligand>
</feature>
<feature type="binding site" evidence="1">
    <location>
        <position position="151"/>
    </location>
    <ligand>
        <name>Mn(2+)</name>
        <dbReference type="ChEBI" id="CHEBI:29035"/>
    </ligand>
</feature>
<feature type="binding site" evidence="1">
    <location>
        <position position="152"/>
    </location>
    <ligand>
        <name>1-deoxy-D-xylulose 5-phosphate</name>
        <dbReference type="ChEBI" id="CHEBI:57792"/>
    </ligand>
</feature>
<feature type="binding site" evidence="1">
    <location>
        <position position="153"/>
    </location>
    <ligand>
        <name>1-deoxy-D-xylulose 5-phosphate</name>
        <dbReference type="ChEBI" id="CHEBI:57792"/>
    </ligand>
</feature>
<feature type="binding site" evidence="1">
    <location>
        <position position="153"/>
    </location>
    <ligand>
        <name>Mn(2+)</name>
        <dbReference type="ChEBI" id="CHEBI:29035"/>
    </ligand>
</feature>
<feature type="binding site" evidence="1">
    <location>
        <position position="177"/>
    </location>
    <ligand>
        <name>1-deoxy-D-xylulose 5-phosphate</name>
        <dbReference type="ChEBI" id="CHEBI:57792"/>
    </ligand>
</feature>
<feature type="binding site" evidence="1">
    <location>
        <position position="200"/>
    </location>
    <ligand>
        <name>1-deoxy-D-xylulose 5-phosphate</name>
        <dbReference type="ChEBI" id="CHEBI:57792"/>
    </ligand>
</feature>
<feature type="binding site" evidence="1">
    <location>
        <position position="206"/>
    </location>
    <ligand>
        <name>NADPH</name>
        <dbReference type="ChEBI" id="CHEBI:57783"/>
    </ligand>
</feature>
<feature type="binding site" evidence="1">
    <location>
        <position position="213"/>
    </location>
    <ligand>
        <name>1-deoxy-D-xylulose 5-phosphate</name>
        <dbReference type="ChEBI" id="CHEBI:57792"/>
    </ligand>
</feature>
<feature type="binding site" evidence="1">
    <location>
        <position position="218"/>
    </location>
    <ligand>
        <name>1-deoxy-D-xylulose 5-phosphate</name>
        <dbReference type="ChEBI" id="CHEBI:57792"/>
    </ligand>
</feature>
<feature type="binding site" evidence="1">
    <location>
        <position position="219"/>
    </location>
    <ligand>
        <name>1-deoxy-D-xylulose 5-phosphate</name>
        <dbReference type="ChEBI" id="CHEBI:57792"/>
    </ligand>
</feature>
<feature type="binding site" evidence="1">
    <location>
        <position position="222"/>
    </location>
    <ligand>
        <name>1-deoxy-D-xylulose 5-phosphate</name>
        <dbReference type="ChEBI" id="CHEBI:57792"/>
    </ligand>
</feature>
<feature type="binding site" evidence="1">
    <location>
        <position position="222"/>
    </location>
    <ligand>
        <name>Mn(2+)</name>
        <dbReference type="ChEBI" id="CHEBI:29035"/>
    </ligand>
</feature>
<dbReference type="EC" id="1.1.1.267" evidence="1"/>
<dbReference type="EMBL" id="CP000325">
    <property type="protein sequence ID" value="ABL04514.1"/>
    <property type="molecule type" value="Genomic_DNA"/>
</dbReference>
<dbReference type="RefSeq" id="WP_011740131.1">
    <property type="nucleotide sequence ID" value="NC_008611.1"/>
</dbReference>
<dbReference type="SMR" id="A0PQ95"/>
<dbReference type="KEGG" id="mul:MUL_2085"/>
<dbReference type="eggNOG" id="COG0743">
    <property type="taxonomic scope" value="Bacteria"/>
</dbReference>
<dbReference type="HOGENOM" id="CLU_035714_4_0_11"/>
<dbReference type="UniPathway" id="UPA00056">
    <property type="reaction ID" value="UER00092"/>
</dbReference>
<dbReference type="Proteomes" id="UP000000765">
    <property type="component" value="Chromosome"/>
</dbReference>
<dbReference type="GO" id="GO:0030604">
    <property type="term" value="F:1-deoxy-D-xylulose-5-phosphate reductoisomerase activity"/>
    <property type="evidence" value="ECO:0007669"/>
    <property type="project" value="UniProtKB-UniRule"/>
</dbReference>
<dbReference type="GO" id="GO:0030145">
    <property type="term" value="F:manganese ion binding"/>
    <property type="evidence" value="ECO:0007669"/>
    <property type="project" value="TreeGrafter"/>
</dbReference>
<dbReference type="GO" id="GO:0070402">
    <property type="term" value="F:NADPH binding"/>
    <property type="evidence" value="ECO:0007669"/>
    <property type="project" value="InterPro"/>
</dbReference>
<dbReference type="GO" id="GO:0051484">
    <property type="term" value="P:isopentenyl diphosphate biosynthetic process, methylerythritol 4-phosphate pathway involved in terpenoid biosynthetic process"/>
    <property type="evidence" value="ECO:0007669"/>
    <property type="project" value="TreeGrafter"/>
</dbReference>
<dbReference type="FunFam" id="3.40.50.720:FF:000045">
    <property type="entry name" value="1-deoxy-D-xylulose 5-phosphate reductoisomerase"/>
    <property type="match status" value="1"/>
</dbReference>
<dbReference type="Gene3D" id="1.10.1740.10">
    <property type="match status" value="1"/>
</dbReference>
<dbReference type="Gene3D" id="3.40.50.720">
    <property type="entry name" value="NAD(P)-binding Rossmann-like Domain"/>
    <property type="match status" value="1"/>
</dbReference>
<dbReference type="HAMAP" id="MF_00183">
    <property type="entry name" value="DXP_reductoisom"/>
    <property type="match status" value="1"/>
</dbReference>
<dbReference type="InterPro" id="IPR003821">
    <property type="entry name" value="DXP_reductoisomerase"/>
</dbReference>
<dbReference type="InterPro" id="IPR013644">
    <property type="entry name" value="DXP_reductoisomerase_C"/>
</dbReference>
<dbReference type="InterPro" id="IPR013512">
    <property type="entry name" value="DXP_reductoisomerase_N"/>
</dbReference>
<dbReference type="InterPro" id="IPR026877">
    <property type="entry name" value="DXPR_C"/>
</dbReference>
<dbReference type="InterPro" id="IPR036169">
    <property type="entry name" value="DXPR_C_sf"/>
</dbReference>
<dbReference type="InterPro" id="IPR036291">
    <property type="entry name" value="NAD(P)-bd_dom_sf"/>
</dbReference>
<dbReference type="NCBIfam" id="TIGR00243">
    <property type="entry name" value="Dxr"/>
    <property type="match status" value="1"/>
</dbReference>
<dbReference type="PANTHER" id="PTHR30525">
    <property type="entry name" value="1-DEOXY-D-XYLULOSE 5-PHOSPHATE REDUCTOISOMERASE"/>
    <property type="match status" value="1"/>
</dbReference>
<dbReference type="PANTHER" id="PTHR30525:SF0">
    <property type="entry name" value="1-DEOXY-D-XYLULOSE 5-PHOSPHATE REDUCTOISOMERASE, CHLOROPLASTIC"/>
    <property type="match status" value="1"/>
</dbReference>
<dbReference type="Pfam" id="PF08436">
    <property type="entry name" value="DXP_redisom_C"/>
    <property type="match status" value="1"/>
</dbReference>
<dbReference type="Pfam" id="PF02670">
    <property type="entry name" value="DXP_reductoisom"/>
    <property type="match status" value="1"/>
</dbReference>
<dbReference type="Pfam" id="PF13288">
    <property type="entry name" value="DXPR_C"/>
    <property type="match status" value="1"/>
</dbReference>
<dbReference type="PIRSF" id="PIRSF006205">
    <property type="entry name" value="Dxp_reductismrs"/>
    <property type="match status" value="1"/>
</dbReference>
<dbReference type="SUPFAM" id="SSF69055">
    <property type="entry name" value="1-deoxy-D-xylulose-5-phosphate reductoisomerase, C-terminal domain"/>
    <property type="match status" value="1"/>
</dbReference>
<dbReference type="SUPFAM" id="SSF55347">
    <property type="entry name" value="Glyceraldehyde-3-phosphate dehydrogenase-like, C-terminal domain"/>
    <property type="match status" value="1"/>
</dbReference>
<dbReference type="SUPFAM" id="SSF51735">
    <property type="entry name" value="NAD(P)-binding Rossmann-fold domains"/>
    <property type="match status" value="1"/>
</dbReference>
<keyword id="KW-0414">Isoprene biosynthesis</keyword>
<keyword id="KW-0464">Manganese</keyword>
<keyword id="KW-0479">Metal-binding</keyword>
<keyword id="KW-0521">NADP</keyword>
<keyword id="KW-0560">Oxidoreductase</keyword>
<comment type="function">
    <text evidence="1">Catalyzes the NADPH-dependent rearrangement and reduction of 1-deoxy-D-xylulose-5-phosphate (DXP) to 2-C-methyl-D-erythritol 4-phosphate (MEP).</text>
</comment>
<comment type="catalytic activity">
    <reaction evidence="1">
        <text>2-C-methyl-D-erythritol 4-phosphate + NADP(+) = 1-deoxy-D-xylulose 5-phosphate + NADPH + H(+)</text>
        <dbReference type="Rhea" id="RHEA:13717"/>
        <dbReference type="ChEBI" id="CHEBI:15378"/>
        <dbReference type="ChEBI" id="CHEBI:57783"/>
        <dbReference type="ChEBI" id="CHEBI:57792"/>
        <dbReference type="ChEBI" id="CHEBI:58262"/>
        <dbReference type="ChEBI" id="CHEBI:58349"/>
        <dbReference type="EC" id="1.1.1.267"/>
    </reaction>
    <physiologicalReaction direction="right-to-left" evidence="1">
        <dbReference type="Rhea" id="RHEA:13719"/>
    </physiologicalReaction>
</comment>
<comment type="cofactor">
    <cofactor evidence="1">
        <name>Mg(2+)</name>
        <dbReference type="ChEBI" id="CHEBI:18420"/>
    </cofactor>
    <cofactor evidence="1">
        <name>Mn(2+)</name>
        <dbReference type="ChEBI" id="CHEBI:29035"/>
    </cofactor>
</comment>
<comment type="pathway">
    <text evidence="1">Isoprenoid biosynthesis; isopentenyl diphosphate biosynthesis via DXP pathway; isopentenyl diphosphate from 1-deoxy-D-xylulose 5-phosphate: step 1/6.</text>
</comment>
<comment type="similarity">
    <text evidence="1">Belongs to the DXR family.</text>
</comment>